<keyword id="KW-0963">Cytoplasm</keyword>
<keyword id="KW-0378">Hydrolase</keyword>
<keyword id="KW-0540">Nuclease</keyword>
<keyword id="KW-0690">Ribosome biogenesis</keyword>
<organism>
    <name type="scientific">Bacteroides fragilis (strain YCH46)</name>
    <dbReference type="NCBI Taxonomy" id="295405"/>
    <lineage>
        <taxon>Bacteria</taxon>
        <taxon>Pseudomonadati</taxon>
        <taxon>Bacteroidota</taxon>
        <taxon>Bacteroidia</taxon>
        <taxon>Bacteroidales</taxon>
        <taxon>Bacteroidaceae</taxon>
        <taxon>Bacteroides</taxon>
    </lineage>
</organism>
<name>YQGF_BACFR</name>
<dbReference type="EC" id="3.1.-.-" evidence="1"/>
<dbReference type="EMBL" id="AP006841">
    <property type="protein sequence ID" value="BAD48430.1"/>
    <property type="molecule type" value="Genomic_DNA"/>
</dbReference>
<dbReference type="RefSeq" id="YP_098964.1">
    <property type="nucleotide sequence ID" value="NC_006347.1"/>
</dbReference>
<dbReference type="SMR" id="Q64VP6"/>
<dbReference type="STRING" id="295405.BF1683"/>
<dbReference type="KEGG" id="bfr:BF1683"/>
<dbReference type="PATRIC" id="fig|295405.11.peg.1634"/>
<dbReference type="HOGENOM" id="CLU_098240_2_1_10"/>
<dbReference type="OrthoDB" id="9796140at2"/>
<dbReference type="Proteomes" id="UP000002197">
    <property type="component" value="Chromosome"/>
</dbReference>
<dbReference type="GO" id="GO:0005829">
    <property type="term" value="C:cytosol"/>
    <property type="evidence" value="ECO:0007669"/>
    <property type="project" value="TreeGrafter"/>
</dbReference>
<dbReference type="GO" id="GO:0004518">
    <property type="term" value="F:nuclease activity"/>
    <property type="evidence" value="ECO:0007669"/>
    <property type="project" value="UniProtKB-KW"/>
</dbReference>
<dbReference type="GO" id="GO:0000967">
    <property type="term" value="P:rRNA 5'-end processing"/>
    <property type="evidence" value="ECO:0007669"/>
    <property type="project" value="UniProtKB-UniRule"/>
</dbReference>
<dbReference type="CDD" id="cd16964">
    <property type="entry name" value="YqgF"/>
    <property type="match status" value="1"/>
</dbReference>
<dbReference type="Gene3D" id="3.30.420.140">
    <property type="entry name" value="YqgF/RNase H-like domain"/>
    <property type="match status" value="1"/>
</dbReference>
<dbReference type="HAMAP" id="MF_00651">
    <property type="entry name" value="Nuclease_YqgF"/>
    <property type="match status" value="1"/>
</dbReference>
<dbReference type="InterPro" id="IPR012337">
    <property type="entry name" value="RNaseH-like_sf"/>
</dbReference>
<dbReference type="InterPro" id="IPR005227">
    <property type="entry name" value="YqgF"/>
</dbReference>
<dbReference type="InterPro" id="IPR006641">
    <property type="entry name" value="YqgF/RNaseH-like_dom"/>
</dbReference>
<dbReference type="InterPro" id="IPR037027">
    <property type="entry name" value="YqgF/RNaseH-like_dom_sf"/>
</dbReference>
<dbReference type="NCBIfam" id="TIGR00250">
    <property type="entry name" value="RNAse_H_YqgF"/>
    <property type="match status" value="1"/>
</dbReference>
<dbReference type="PANTHER" id="PTHR33317">
    <property type="entry name" value="POLYNUCLEOTIDYL TRANSFERASE, RIBONUCLEASE H-LIKE SUPERFAMILY PROTEIN"/>
    <property type="match status" value="1"/>
</dbReference>
<dbReference type="PANTHER" id="PTHR33317:SF4">
    <property type="entry name" value="POLYNUCLEOTIDYL TRANSFERASE, RIBONUCLEASE H-LIKE SUPERFAMILY PROTEIN"/>
    <property type="match status" value="1"/>
</dbReference>
<dbReference type="Pfam" id="PF03652">
    <property type="entry name" value="RuvX"/>
    <property type="match status" value="1"/>
</dbReference>
<dbReference type="SMART" id="SM00732">
    <property type="entry name" value="YqgFc"/>
    <property type="match status" value="1"/>
</dbReference>
<dbReference type="SUPFAM" id="SSF53098">
    <property type="entry name" value="Ribonuclease H-like"/>
    <property type="match status" value="1"/>
</dbReference>
<comment type="function">
    <text evidence="1">Could be a nuclease involved in processing of the 5'-end of pre-16S rRNA.</text>
</comment>
<comment type="subcellular location">
    <subcellularLocation>
        <location evidence="1">Cytoplasm</location>
    </subcellularLocation>
</comment>
<comment type="similarity">
    <text evidence="1">Belongs to the YqgF nuclease family.</text>
</comment>
<accession>Q64VP6</accession>
<protein>
    <recommendedName>
        <fullName evidence="1">Putative pre-16S rRNA nuclease</fullName>
        <ecNumber evidence="1">3.1.-.-</ecNumber>
    </recommendedName>
</protein>
<feature type="chain" id="PRO_0000172018" description="Putative pre-16S rRNA nuclease">
    <location>
        <begin position="1"/>
        <end position="138"/>
    </location>
</feature>
<evidence type="ECO:0000255" key="1">
    <source>
        <dbReference type="HAMAP-Rule" id="MF_00651"/>
    </source>
</evidence>
<sequence length="138" mass="15819">MSRIVAIDYGRKRTGIAVSDTMQIIANGLTTVPTHELLDFITNYVKQESVERIIIGLPKQMNNEVSENMKNIEPFVRSLKKRLPDMPVEYVDERFTSVLAHRTMLEAGLKKKDRQNKALVDEISATIILQSYLETKRL</sequence>
<gene>
    <name type="ordered locus">BF1683</name>
</gene>
<proteinExistence type="inferred from homology"/>
<reference key="1">
    <citation type="journal article" date="2004" name="Proc. Natl. Acad. Sci. U.S.A.">
        <title>Genomic analysis of Bacteroides fragilis reveals extensive DNA inversions regulating cell surface adaptation.</title>
        <authorList>
            <person name="Kuwahara T."/>
            <person name="Yamashita A."/>
            <person name="Hirakawa H."/>
            <person name="Nakayama H."/>
            <person name="Toh H."/>
            <person name="Okada N."/>
            <person name="Kuhara S."/>
            <person name="Hattori M."/>
            <person name="Hayashi T."/>
            <person name="Ohnishi Y."/>
        </authorList>
    </citation>
    <scope>NUCLEOTIDE SEQUENCE [LARGE SCALE GENOMIC DNA]</scope>
    <source>
        <strain>YCH46</strain>
    </source>
</reference>